<gene>
    <name evidence="1" type="primary">ribH</name>
    <name type="ordered locus">ECIAI1_0415</name>
</gene>
<proteinExistence type="inferred from homology"/>
<reference key="1">
    <citation type="journal article" date="2009" name="PLoS Genet.">
        <title>Organised genome dynamics in the Escherichia coli species results in highly diverse adaptive paths.</title>
        <authorList>
            <person name="Touchon M."/>
            <person name="Hoede C."/>
            <person name="Tenaillon O."/>
            <person name="Barbe V."/>
            <person name="Baeriswyl S."/>
            <person name="Bidet P."/>
            <person name="Bingen E."/>
            <person name="Bonacorsi S."/>
            <person name="Bouchier C."/>
            <person name="Bouvet O."/>
            <person name="Calteau A."/>
            <person name="Chiapello H."/>
            <person name="Clermont O."/>
            <person name="Cruveiller S."/>
            <person name="Danchin A."/>
            <person name="Diard M."/>
            <person name="Dossat C."/>
            <person name="Karoui M.E."/>
            <person name="Frapy E."/>
            <person name="Garry L."/>
            <person name="Ghigo J.M."/>
            <person name="Gilles A.M."/>
            <person name="Johnson J."/>
            <person name="Le Bouguenec C."/>
            <person name="Lescat M."/>
            <person name="Mangenot S."/>
            <person name="Martinez-Jehanne V."/>
            <person name="Matic I."/>
            <person name="Nassif X."/>
            <person name="Oztas S."/>
            <person name="Petit M.A."/>
            <person name="Pichon C."/>
            <person name="Rouy Z."/>
            <person name="Ruf C.S."/>
            <person name="Schneider D."/>
            <person name="Tourret J."/>
            <person name="Vacherie B."/>
            <person name="Vallenet D."/>
            <person name="Medigue C."/>
            <person name="Rocha E.P.C."/>
            <person name="Denamur E."/>
        </authorList>
    </citation>
    <scope>NUCLEOTIDE SEQUENCE [LARGE SCALE GENOMIC DNA]</scope>
    <source>
        <strain>IAI1</strain>
    </source>
</reference>
<comment type="function">
    <text evidence="1">Catalyzes the formation of 6,7-dimethyl-8-ribityllumazine by condensation of 5-amino-6-(D-ribitylamino)uracil with 3,4-dihydroxy-2-butanone 4-phosphate. This is the penultimate step in the biosynthesis of riboflavin.</text>
</comment>
<comment type="catalytic activity">
    <reaction evidence="1">
        <text>(2S)-2-hydroxy-3-oxobutyl phosphate + 5-amino-6-(D-ribitylamino)uracil = 6,7-dimethyl-8-(1-D-ribityl)lumazine + phosphate + 2 H2O + H(+)</text>
        <dbReference type="Rhea" id="RHEA:26152"/>
        <dbReference type="ChEBI" id="CHEBI:15377"/>
        <dbReference type="ChEBI" id="CHEBI:15378"/>
        <dbReference type="ChEBI" id="CHEBI:15934"/>
        <dbReference type="ChEBI" id="CHEBI:43474"/>
        <dbReference type="ChEBI" id="CHEBI:58201"/>
        <dbReference type="ChEBI" id="CHEBI:58830"/>
        <dbReference type="EC" id="2.5.1.78"/>
    </reaction>
</comment>
<comment type="pathway">
    <text evidence="1">Cofactor biosynthesis; riboflavin biosynthesis; riboflavin from 2-hydroxy-3-oxobutyl phosphate and 5-amino-6-(D-ribitylamino)uracil: step 1/2.</text>
</comment>
<comment type="subunit">
    <text evidence="1">Forms an icosahedral capsid composed of 60 subunits, arranged as a dodecamer of pentamers.</text>
</comment>
<comment type="similarity">
    <text evidence="1">Belongs to the DMRL synthase family.</text>
</comment>
<feature type="chain" id="PRO_1000195488" description="6,7-dimethyl-8-ribityllumazine synthase">
    <location>
        <begin position="1"/>
        <end position="156"/>
    </location>
</feature>
<feature type="active site" description="Proton donor" evidence="1">
    <location>
        <position position="89"/>
    </location>
</feature>
<feature type="binding site" evidence="1">
    <location>
        <position position="22"/>
    </location>
    <ligand>
        <name>5-amino-6-(D-ribitylamino)uracil</name>
        <dbReference type="ChEBI" id="CHEBI:15934"/>
    </ligand>
</feature>
<feature type="binding site" evidence="1">
    <location>
        <begin position="57"/>
        <end position="59"/>
    </location>
    <ligand>
        <name>5-amino-6-(D-ribitylamino)uracil</name>
        <dbReference type="ChEBI" id="CHEBI:15934"/>
    </ligand>
</feature>
<feature type="binding site" evidence="1">
    <location>
        <begin position="81"/>
        <end position="83"/>
    </location>
    <ligand>
        <name>5-amino-6-(D-ribitylamino)uracil</name>
        <dbReference type="ChEBI" id="CHEBI:15934"/>
    </ligand>
</feature>
<feature type="binding site" evidence="1">
    <location>
        <begin position="86"/>
        <end position="87"/>
    </location>
    <ligand>
        <name>(2S)-2-hydroxy-3-oxobutyl phosphate</name>
        <dbReference type="ChEBI" id="CHEBI:58830"/>
    </ligand>
</feature>
<feature type="binding site" evidence="1">
    <location>
        <position position="114"/>
    </location>
    <ligand>
        <name>5-amino-6-(D-ribitylamino)uracil</name>
        <dbReference type="ChEBI" id="CHEBI:15934"/>
    </ligand>
</feature>
<feature type="binding site" evidence="1">
    <location>
        <position position="128"/>
    </location>
    <ligand>
        <name>(2S)-2-hydroxy-3-oxobutyl phosphate</name>
        <dbReference type="ChEBI" id="CHEBI:58830"/>
    </ligand>
</feature>
<sequence>MNIIEANVATPDARVAITIARFNNFINDSLLEGAIDALKRIGQVKDENITVVWVPGAYELPLAAGALAKTGKYDAVIALGTVIRGGTAHFEYVAGGASNGLAHVAQDSEIPVAFGVLTTESIEQAIERAGTKAGNKGAEAALTALEMINVLKAIKA</sequence>
<name>RISB_ECO8A</name>
<organism>
    <name type="scientific">Escherichia coli O8 (strain IAI1)</name>
    <dbReference type="NCBI Taxonomy" id="585034"/>
    <lineage>
        <taxon>Bacteria</taxon>
        <taxon>Pseudomonadati</taxon>
        <taxon>Pseudomonadota</taxon>
        <taxon>Gammaproteobacteria</taxon>
        <taxon>Enterobacterales</taxon>
        <taxon>Enterobacteriaceae</taxon>
        <taxon>Escherichia</taxon>
    </lineage>
</organism>
<evidence type="ECO:0000255" key="1">
    <source>
        <dbReference type="HAMAP-Rule" id="MF_00178"/>
    </source>
</evidence>
<protein>
    <recommendedName>
        <fullName evidence="1">6,7-dimethyl-8-ribityllumazine synthase</fullName>
        <shortName evidence="1">DMRL synthase</shortName>
        <shortName evidence="1">LS</shortName>
        <shortName evidence="1">Lumazine synthase</shortName>
        <ecNumber evidence="1">2.5.1.78</ecNumber>
    </recommendedName>
</protein>
<dbReference type="EC" id="2.5.1.78" evidence="1"/>
<dbReference type="EMBL" id="CU928160">
    <property type="protein sequence ID" value="CAQ97287.1"/>
    <property type="molecule type" value="Genomic_DNA"/>
</dbReference>
<dbReference type="SMR" id="B7M3Q4"/>
<dbReference type="KEGG" id="ecr:ECIAI1_0415"/>
<dbReference type="HOGENOM" id="CLU_089358_1_1_6"/>
<dbReference type="UniPathway" id="UPA00275">
    <property type="reaction ID" value="UER00404"/>
</dbReference>
<dbReference type="GO" id="GO:0005829">
    <property type="term" value="C:cytosol"/>
    <property type="evidence" value="ECO:0007669"/>
    <property type="project" value="TreeGrafter"/>
</dbReference>
<dbReference type="GO" id="GO:0009349">
    <property type="term" value="C:riboflavin synthase complex"/>
    <property type="evidence" value="ECO:0007669"/>
    <property type="project" value="InterPro"/>
</dbReference>
<dbReference type="GO" id="GO:0000906">
    <property type="term" value="F:6,7-dimethyl-8-ribityllumazine synthase activity"/>
    <property type="evidence" value="ECO:0007669"/>
    <property type="project" value="UniProtKB-UniRule"/>
</dbReference>
<dbReference type="GO" id="GO:0009231">
    <property type="term" value="P:riboflavin biosynthetic process"/>
    <property type="evidence" value="ECO:0007669"/>
    <property type="project" value="UniProtKB-UniRule"/>
</dbReference>
<dbReference type="CDD" id="cd09209">
    <property type="entry name" value="Lumazine_synthase-I"/>
    <property type="match status" value="1"/>
</dbReference>
<dbReference type="FunFam" id="3.40.50.960:FF:000001">
    <property type="entry name" value="6,7-dimethyl-8-ribityllumazine synthase"/>
    <property type="match status" value="1"/>
</dbReference>
<dbReference type="Gene3D" id="3.40.50.960">
    <property type="entry name" value="Lumazine/riboflavin synthase"/>
    <property type="match status" value="1"/>
</dbReference>
<dbReference type="HAMAP" id="MF_00178">
    <property type="entry name" value="Lumazine_synth"/>
    <property type="match status" value="1"/>
</dbReference>
<dbReference type="InterPro" id="IPR034964">
    <property type="entry name" value="LS"/>
</dbReference>
<dbReference type="InterPro" id="IPR002180">
    <property type="entry name" value="LS/RS"/>
</dbReference>
<dbReference type="InterPro" id="IPR036467">
    <property type="entry name" value="LS/RS_sf"/>
</dbReference>
<dbReference type="NCBIfam" id="TIGR00114">
    <property type="entry name" value="lumazine-synth"/>
    <property type="match status" value="1"/>
</dbReference>
<dbReference type="NCBIfam" id="NF000812">
    <property type="entry name" value="PRK00061.1-4"/>
    <property type="match status" value="1"/>
</dbReference>
<dbReference type="PANTHER" id="PTHR21058:SF0">
    <property type="entry name" value="6,7-DIMETHYL-8-RIBITYLLUMAZINE SYNTHASE"/>
    <property type="match status" value="1"/>
</dbReference>
<dbReference type="PANTHER" id="PTHR21058">
    <property type="entry name" value="6,7-DIMETHYL-8-RIBITYLLUMAZINE SYNTHASE DMRL SYNTHASE LUMAZINE SYNTHASE"/>
    <property type="match status" value="1"/>
</dbReference>
<dbReference type="Pfam" id="PF00885">
    <property type="entry name" value="DMRL_synthase"/>
    <property type="match status" value="1"/>
</dbReference>
<dbReference type="SUPFAM" id="SSF52121">
    <property type="entry name" value="Lumazine synthase"/>
    <property type="match status" value="1"/>
</dbReference>
<keyword id="KW-0686">Riboflavin biosynthesis</keyword>
<keyword id="KW-0808">Transferase</keyword>
<accession>B7M3Q4</accession>